<reference key="1">
    <citation type="submission" date="2008-01" db="EMBL/GenBank/DDBJ databases">
        <title>Complete sequence of Thermoanaerobacter pseudethanolicus 39E.</title>
        <authorList>
            <person name="Copeland A."/>
            <person name="Lucas S."/>
            <person name="Lapidus A."/>
            <person name="Barry K."/>
            <person name="Glavina del Rio T."/>
            <person name="Dalin E."/>
            <person name="Tice H."/>
            <person name="Pitluck S."/>
            <person name="Bruce D."/>
            <person name="Goodwin L."/>
            <person name="Saunders E."/>
            <person name="Brettin T."/>
            <person name="Detter J.C."/>
            <person name="Han C."/>
            <person name="Schmutz J."/>
            <person name="Larimer F."/>
            <person name="Land M."/>
            <person name="Hauser L."/>
            <person name="Kyrpides N."/>
            <person name="Lykidis A."/>
            <person name="Hemme C."/>
            <person name="Fields M.W."/>
            <person name="He Z."/>
            <person name="Zhou J."/>
            <person name="Richardson P."/>
        </authorList>
    </citation>
    <scope>NUCLEOTIDE SEQUENCE [LARGE SCALE GENOMIC DNA]</scope>
    <source>
        <strain>ATCC 33223 / DSM 2355 / 39E</strain>
    </source>
</reference>
<keyword id="KW-0028">Amino-acid biosynthesis</keyword>
<keyword id="KW-0057">Aromatic amino acid biosynthesis</keyword>
<keyword id="KW-0170">Cobalt</keyword>
<keyword id="KW-0963">Cytoplasm</keyword>
<keyword id="KW-0456">Lyase</keyword>
<keyword id="KW-0479">Metal-binding</keyword>
<keyword id="KW-0520">NAD</keyword>
<keyword id="KW-0547">Nucleotide-binding</keyword>
<keyword id="KW-1185">Reference proteome</keyword>
<keyword id="KW-0862">Zinc</keyword>
<accession>B0K924</accession>
<sequence length="356" mass="40371">MDFITIDLKERSYPIYFAYDSFDKLGEIVKKHVRSSKTFIITDFNVYPLYFEKLNESLKKSRFDVSYEVIPAGETSKTMEMAQRLLEKAYDYGLLRDSSVIALGGGVVGDIAGFVAATYMRGIDFVQIPTTLLAQVDSSVGGKVAVNLKKGKNIIGAFHQPKMVYIDTAVLNTLDKREILGGLAEIIKYGIIWDFSLFEYIESNIYEILDLEEDKLRHIIKKSCEIKGKIVSLDEKEENLRSILNFGHTIGHAIEALTGYERYIHGEAVAIGMVYACKLALNLGYIDEKYFERIFSLIQRTGLPTDYEDLHKEDIVEAIKLDKKSREAKINFVLLRGLGKAEVTTVKEEEILKVLK</sequence>
<dbReference type="EC" id="4.2.3.4" evidence="1"/>
<dbReference type="EMBL" id="CP000924">
    <property type="protein sequence ID" value="ABY94637.1"/>
    <property type="molecule type" value="Genomic_DNA"/>
</dbReference>
<dbReference type="RefSeq" id="WP_012269260.1">
    <property type="nucleotide sequence ID" value="NC_010321.1"/>
</dbReference>
<dbReference type="SMR" id="B0K924"/>
<dbReference type="STRING" id="340099.Teth39_0982"/>
<dbReference type="KEGG" id="tpd:Teth39_0982"/>
<dbReference type="eggNOG" id="COG0337">
    <property type="taxonomic scope" value="Bacteria"/>
</dbReference>
<dbReference type="HOGENOM" id="CLU_001201_0_2_9"/>
<dbReference type="UniPathway" id="UPA00053">
    <property type="reaction ID" value="UER00085"/>
</dbReference>
<dbReference type="Proteomes" id="UP000002156">
    <property type="component" value="Chromosome"/>
</dbReference>
<dbReference type="GO" id="GO:0005737">
    <property type="term" value="C:cytoplasm"/>
    <property type="evidence" value="ECO:0007669"/>
    <property type="project" value="UniProtKB-SubCell"/>
</dbReference>
<dbReference type="GO" id="GO:0003856">
    <property type="term" value="F:3-dehydroquinate synthase activity"/>
    <property type="evidence" value="ECO:0007669"/>
    <property type="project" value="UniProtKB-UniRule"/>
</dbReference>
<dbReference type="GO" id="GO:0046872">
    <property type="term" value="F:metal ion binding"/>
    <property type="evidence" value="ECO:0007669"/>
    <property type="project" value="UniProtKB-KW"/>
</dbReference>
<dbReference type="GO" id="GO:0000166">
    <property type="term" value="F:nucleotide binding"/>
    <property type="evidence" value="ECO:0007669"/>
    <property type="project" value="UniProtKB-KW"/>
</dbReference>
<dbReference type="GO" id="GO:0008652">
    <property type="term" value="P:amino acid biosynthetic process"/>
    <property type="evidence" value="ECO:0007669"/>
    <property type="project" value="UniProtKB-KW"/>
</dbReference>
<dbReference type="GO" id="GO:0009073">
    <property type="term" value="P:aromatic amino acid family biosynthetic process"/>
    <property type="evidence" value="ECO:0007669"/>
    <property type="project" value="UniProtKB-KW"/>
</dbReference>
<dbReference type="GO" id="GO:0009423">
    <property type="term" value="P:chorismate biosynthetic process"/>
    <property type="evidence" value="ECO:0007669"/>
    <property type="project" value="UniProtKB-UniRule"/>
</dbReference>
<dbReference type="CDD" id="cd08195">
    <property type="entry name" value="DHQS"/>
    <property type="match status" value="1"/>
</dbReference>
<dbReference type="FunFam" id="3.40.50.1970:FF:000001">
    <property type="entry name" value="3-dehydroquinate synthase"/>
    <property type="match status" value="1"/>
</dbReference>
<dbReference type="Gene3D" id="3.40.50.1970">
    <property type="match status" value="1"/>
</dbReference>
<dbReference type="Gene3D" id="1.20.1090.10">
    <property type="entry name" value="Dehydroquinate synthase-like - alpha domain"/>
    <property type="match status" value="1"/>
</dbReference>
<dbReference type="HAMAP" id="MF_00110">
    <property type="entry name" value="DHQ_synthase"/>
    <property type="match status" value="1"/>
</dbReference>
<dbReference type="InterPro" id="IPR050071">
    <property type="entry name" value="Dehydroquinate_synthase"/>
</dbReference>
<dbReference type="InterPro" id="IPR016037">
    <property type="entry name" value="DHQ_synth_AroB"/>
</dbReference>
<dbReference type="InterPro" id="IPR030963">
    <property type="entry name" value="DHQ_synth_fam"/>
</dbReference>
<dbReference type="InterPro" id="IPR030960">
    <property type="entry name" value="DHQS/DOIS_N"/>
</dbReference>
<dbReference type="InterPro" id="IPR056179">
    <property type="entry name" value="DHQS_C"/>
</dbReference>
<dbReference type="NCBIfam" id="TIGR01357">
    <property type="entry name" value="aroB"/>
    <property type="match status" value="1"/>
</dbReference>
<dbReference type="PANTHER" id="PTHR43622">
    <property type="entry name" value="3-DEHYDROQUINATE SYNTHASE"/>
    <property type="match status" value="1"/>
</dbReference>
<dbReference type="PANTHER" id="PTHR43622:SF1">
    <property type="entry name" value="3-DEHYDROQUINATE SYNTHASE"/>
    <property type="match status" value="1"/>
</dbReference>
<dbReference type="Pfam" id="PF01761">
    <property type="entry name" value="DHQ_synthase"/>
    <property type="match status" value="1"/>
</dbReference>
<dbReference type="Pfam" id="PF24621">
    <property type="entry name" value="DHQS_C"/>
    <property type="match status" value="1"/>
</dbReference>
<dbReference type="PIRSF" id="PIRSF001455">
    <property type="entry name" value="DHQ_synth"/>
    <property type="match status" value="1"/>
</dbReference>
<dbReference type="SUPFAM" id="SSF56796">
    <property type="entry name" value="Dehydroquinate synthase-like"/>
    <property type="match status" value="1"/>
</dbReference>
<proteinExistence type="inferred from homology"/>
<organism>
    <name type="scientific">Thermoanaerobacter pseudethanolicus (strain ATCC 33223 / 39E)</name>
    <name type="common">Clostridium thermohydrosulfuricum</name>
    <dbReference type="NCBI Taxonomy" id="340099"/>
    <lineage>
        <taxon>Bacteria</taxon>
        <taxon>Bacillati</taxon>
        <taxon>Bacillota</taxon>
        <taxon>Clostridia</taxon>
        <taxon>Thermoanaerobacterales</taxon>
        <taxon>Thermoanaerobacteraceae</taxon>
        <taxon>Thermoanaerobacter</taxon>
    </lineage>
</organism>
<name>AROB_THEP3</name>
<feature type="chain" id="PRO_1000094647" description="3-dehydroquinate synthase">
    <location>
        <begin position="1"/>
        <end position="356"/>
    </location>
</feature>
<feature type="binding site" evidence="1">
    <location>
        <begin position="106"/>
        <end position="110"/>
    </location>
    <ligand>
        <name>NAD(+)</name>
        <dbReference type="ChEBI" id="CHEBI:57540"/>
    </ligand>
</feature>
<feature type="binding site" evidence="1">
    <location>
        <begin position="130"/>
        <end position="131"/>
    </location>
    <ligand>
        <name>NAD(+)</name>
        <dbReference type="ChEBI" id="CHEBI:57540"/>
    </ligand>
</feature>
<feature type="binding site" evidence="1">
    <location>
        <position position="143"/>
    </location>
    <ligand>
        <name>NAD(+)</name>
        <dbReference type="ChEBI" id="CHEBI:57540"/>
    </ligand>
</feature>
<feature type="binding site" evidence="1">
    <location>
        <position position="152"/>
    </location>
    <ligand>
        <name>NAD(+)</name>
        <dbReference type="ChEBI" id="CHEBI:57540"/>
    </ligand>
</feature>
<feature type="binding site" evidence="1">
    <location>
        <position position="185"/>
    </location>
    <ligand>
        <name>Zn(2+)</name>
        <dbReference type="ChEBI" id="CHEBI:29105"/>
    </ligand>
</feature>
<feature type="binding site" evidence="1">
    <location>
        <position position="248"/>
    </location>
    <ligand>
        <name>Zn(2+)</name>
        <dbReference type="ChEBI" id="CHEBI:29105"/>
    </ligand>
</feature>
<feature type="binding site" evidence="1">
    <location>
        <position position="265"/>
    </location>
    <ligand>
        <name>Zn(2+)</name>
        <dbReference type="ChEBI" id="CHEBI:29105"/>
    </ligand>
</feature>
<comment type="function">
    <text evidence="1">Catalyzes the conversion of 3-deoxy-D-arabino-heptulosonate 7-phosphate (DAHP) to dehydroquinate (DHQ).</text>
</comment>
<comment type="catalytic activity">
    <reaction evidence="1">
        <text>7-phospho-2-dehydro-3-deoxy-D-arabino-heptonate = 3-dehydroquinate + phosphate</text>
        <dbReference type="Rhea" id="RHEA:21968"/>
        <dbReference type="ChEBI" id="CHEBI:32364"/>
        <dbReference type="ChEBI" id="CHEBI:43474"/>
        <dbReference type="ChEBI" id="CHEBI:58394"/>
        <dbReference type="EC" id="4.2.3.4"/>
    </reaction>
</comment>
<comment type="cofactor">
    <cofactor evidence="1">
        <name>Co(2+)</name>
        <dbReference type="ChEBI" id="CHEBI:48828"/>
    </cofactor>
    <cofactor evidence="1">
        <name>Zn(2+)</name>
        <dbReference type="ChEBI" id="CHEBI:29105"/>
    </cofactor>
    <text evidence="1">Binds 1 divalent metal cation per subunit. Can use either Co(2+) or Zn(2+).</text>
</comment>
<comment type="cofactor">
    <cofactor evidence="1">
        <name>NAD(+)</name>
        <dbReference type="ChEBI" id="CHEBI:57540"/>
    </cofactor>
</comment>
<comment type="pathway">
    <text evidence="1">Metabolic intermediate biosynthesis; chorismate biosynthesis; chorismate from D-erythrose 4-phosphate and phosphoenolpyruvate: step 2/7.</text>
</comment>
<comment type="subcellular location">
    <subcellularLocation>
        <location evidence="1">Cytoplasm</location>
    </subcellularLocation>
</comment>
<comment type="similarity">
    <text evidence="1">Belongs to the sugar phosphate cyclases superfamily. Dehydroquinate synthase family.</text>
</comment>
<protein>
    <recommendedName>
        <fullName evidence="1">3-dehydroquinate synthase</fullName>
        <shortName evidence="1">DHQS</shortName>
        <ecNumber evidence="1">4.2.3.4</ecNumber>
    </recommendedName>
</protein>
<gene>
    <name evidence="1" type="primary">aroB</name>
    <name type="ordered locus">Teth39_0982</name>
</gene>
<evidence type="ECO:0000255" key="1">
    <source>
        <dbReference type="HAMAP-Rule" id="MF_00110"/>
    </source>
</evidence>